<evidence type="ECO:0000255" key="1">
    <source>
        <dbReference type="HAMAP-Rule" id="MF_00179"/>
    </source>
</evidence>
<sequence length="192" mass="21566">MKRLEVSNQAKLPTQFGEFCIQCFREKGSNGSKEHLVVFTPNFSQNPLVRLHSECLTGDALGSQKCDCGGALQIALERISKEGGLVIYLRQEGRGIGLFNKVNAYALQDKGYDTIQANEMIGFKDDERDYSIAGEILEYYGIKKMRLLTNNPKKIAALEKYAEVTRESLIVCANEHNQGYLEVKKLKMGHLL</sequence>
<dbReference type="EC" id="3.5.4.25" evidence="1"/>
<dbReference type="EMBL" id="CP001072">
    <property type="protein sequence ID" value="ACD48011.1"/>
    <property type="molecule type" value="Genomic_DNA"/>
</dbReference>
<dbReference type="RefSeq" id="WP_000825049.1">
    <property type="nucleotide sequence ID" value="NC_010698.2"/>
</dbReference>
<dbReference type="SMR" id="B2UT29"/>
<dbReference type="KEGG" id="hps:HPSH_02805"/>
<dbReference type="HOGENOM" id="CLU_020273_2_1_7"/>
<dbReference type="UniPathway" id="UPA00275">
    <property type="reaction ID" value="UER00400"/>
</dbReference>
<dbReference type="GO" id="GO:0005829">
    <property type="term" value="C:cytosol"/>
    <property type="evidence" value="ECO:0007669"/>
    <property type="project" value="TreeGrafter"/>
</dbReference>
<dbReference type="GO" id="GO:0005525">
    <property type="term" value="F:GTP binding"/>
    <property type="evidence" value="ECO:0007669"/>
    <property type="project" value="UniProtKB-KW"/>
</dbReference>
<dbReference type="GO" id="GO:0003935">
    <property type="term" value="F:GTP cyclohydrolase II activity"/>
    <property type="evidence" value="ECO:0007669"/>
    <property type="project" value="UniProtKB-UniRule"/>
</dbReference>
<dbReference type="GO" id="GO:0008270">
    <property type="term" value="F:zinc ion binding"/>
    <property type="evidence" value="ECO:0007669"/>
    <property type="project" value="UniProtKB-UniRule"/>
</dbReference>
<dbReference type="GO" id="GO:0009231">
    <property type="term" value="P:riboflavin biosynthetic process"/>
    <property type="evidence" value="ECO:0007669"/>
    <property type="project" value="UniProtKB-UniRule"/>
</dbReference>
<dbReference type="CDD" id="cd00641">
    <property type="entry name" value="GTP_cyclohydro2"/>
    <property type="match status" value="1"/>
</dbReference>
<dbReference type="FunFam" id="3.40.50.10990:FF:000001">
    <property type="entry name" value="Riboflavin biosynthesis protein RibBA"/>
    <property type="match status" value="1"/>
</dbReference>
<dbReference type="Gene3D" id="3.40.50.10990">
    <property type="entry name" value="GTP cyclohydrolase II"/>
    <property type="match status" value="1"/>
</dbReference>
<dbReference type="HAMAP" id="MF_00179">
    <property type="entry name" value="RibA"/>
    <property type="match status" value="1"/>
</dbReference>
<dbReference type="InterPro" id="IPR032677">
    <property type="entry name" value="GTP_cyclohydro_II"/>
</dbReference>
<dbReference type="InterPro" id="IPR000926">
    <property type="entry name" value="RibA"/>
</dbReference>
<dbReference type="InterPro" id="IPR036144">
    <property type="entry name" value="RibA-like_sf"/>
</dbReference>
<dbReference type="NCBIfam" id="NF001591">
    <property type="entry name" value="PRK00393.1"/>
    <property type="match status" value="1"/>
</dbReference>
<dbReference type="NCBIfam" id="TIGR00505">
    <property type="entry name" value="ribA"/>
    <property type="match status" value="1"/>
</dbReference>
<dbReference type="PANTHER" id="PTHR21327:SF18">
    <property type="entry name" value="3,4-DIHYDROXY-2-BUTANONE 4-PHOSPHATE SYNTHASE"/>
    <property type="match status" value="1"/>
</dbReference>
<dbReference type="PANTHER" id="PTHR21327">
    <property type="entry name" value="GTP CYCLOHYDROLASE II-RELATED"/>
    <property type="match status" value="1"/>
</dbReference>
<dbReference type="Pfam" id="PF00925">
    <property type="entry name" value="GTP_cyclohydro2"/>
    <property type="match status" value="1"/>
</dbReference>
<dbReference type="SUPFAM" id="SSF142695">
    <property type="entry name" value="RibA-like"/>
    <property type="match status" value="1"/>
</dbReference>
<gene>
    <name evidence="1" type="primary">ribA</name>
    <name type="ordered locus">HPSH_02805</name>
</gene>
<proteinExistence type="inferred from homology"/>
<organism>
    <name type="scientific">Helicobacter pylori (strain Shi470)</name>
    <dbReference type="NCBI Taxonomy" id="512562"/>
    <lineage>
        <taxon>Bacteria</taxon>
        <taxon>Pseudomonadati</taxon>
        <taxon>Campylobacterota</taxon>
        <taxon>Epsilonproteobacteria</taxon>
        <taxon>Campylobacterales</taxon>
        <taxon>Helicobacteraceae</taxon>
        <taxon>Helicobacter</taxon>
    </lineage>
</organism>
<protein>
    <recommendedName>
        <fullName evidence="1">GTP cyclohydrolase-2</fullName>
        <ecNumber evidence="1">3.5.4.25</ecNumber>
    </recommendedName>
    <alternativeName>
        <fullName evidence="1">GTP cyclohydrolase II</fullName>
    </alternativeName>
</protein>
<name>RIBA_HELPS</name>
<keyword id="KW-0342">GTP-binding</keyword>
<keyword id="KW-0378">Hydrolase</keyword>
<keyword id="KW-0479">Metal-binding</keyword>
<keyword id="KW-0547">Nucleotide-binding</keyword>
<keyword id="KW-0686">Riboflavin biosynthesis</keyword>
<keyword id="KW-0862">Zinc</keyword>
<feature type="chain" id="PRO_1000098268" description="GTP cyclohydrolase-2">
    <location>
        <begin position="1"/>
        <end position="192"/>
    </location>
</feature>
<feature type="active site" description="Proton acceptor" evidence="1">
    <location>
        <position position="126"/>
    </location>
</feature>
<feature type="active site" description="Nucleophile" evidence="1">
    <location>
        <position position="128"/>
    </location>
</feature>
<feature type="binding site" evidence="1">
    <location>
        <begin position="50"/>
        <end position="54"/>
    </location>
    <ligand>
        <name>GTP</name>
        <dbReference type="ChEBI" id="CHEBI:37565"/>
    </ligand>
</feature>
<feature type="binding site" evidence="1">
    <location>
        <position position="55"/>
    </location>
    <ligand>
        <name>Zn(2+)</name>
        <dbReference type="ChEBI" id="CHEBI:29105"/>
        <note>catalytic</note>
    </ligand>
</feature>
<feature type="binding site" evidence="1">
    <location>
        <position position="66"/>
    </location>
    <ligand>
        <name>Zn(2+)</name>
        <dbReference type="ChEBI" id="CHEBI:29105"/>
        <note>catalytic</note>
    </ligand>
</feature>
<feature type="binding site" evidence="1">
    <location>
        <position position="68"/>
    </location>
    <ligand>
        <name>Zn(2+)</name>
        <dbReference type="ChEBI" id="CHEBI:29105"/>
        <note>catalytic</note>
    </ligand>
</feature>
<feature type="binding site" evidence="1">
    <location>
        <begin position="92"/>
        <end position="94"/>
    </location>
    <ligand>
        <name>GTP</name>
        <dbReference type="ChEBI" id="CHEBI:37565"/>
    </ligand>
</feature>
<feature type="binding site" evidence="1">
    <location>
        <position position="114"/>
    </location>
    <ligand>
        <name>GTP</name>
        <dbReference type="ChEBI" id="CHEBI:37565"/>
    </ligand>
</feature>
<feature type="binding site" evidence="1">
    <location>
        <position position="149"/>
    </location>
    <ligand>
        <name>GTP</name>
        <dbReference type="ChEBI" id="CHEBI:37565"/>
    </ligand>
</feature>
<feature type="binding site" evidence="1">
    <location>
        <position position="154"/>
    </location>
    <ligand>
        <name>GTP</name>
        <dbReference type="ChEBI" id="CHEBI:37565"/>
    </ligand>
</feature>
<comment type="function">
    <text evidence="1">Catalyzes the conversion of GTP to 2,5-diamino-6-ribosylamino-4(3H)-pyrimidinone 5'-phosphate (DARP), formate and pyrophosphate.</text>
</comment>
<comment type="catalytic activity">
    <reaction evidence="1">
        <text>GTP + 4 H2O = 2,5-diamino-6-hydroxy-4-(5-phosphoribosylamino)-pyrimidine + formate + 2 phosphate + 3 H(+)</text>
        <dbReference type="Rhea" id="RHEA:23704"/>
        <dbReference type="ChEBI" id="CHEBI:15377"/>
        <dbReference type="ChEBI" id="CHEBI:15378"/>
        <dbReference type="ChEBI" id="CHEBI:15740"/>
        <dbReference type="ChEBI" id="CHEBI:37565"/>
        <dbReference type="ChEBI" id="CHEBI:43474"/>
        <dbReference type="ChEBI" id="CHEBI:58614"/>
        <dbReference type="EC" id="3.5.4.25"/>
    </reaction>
</comment>
<comment type="cofactor">
    <cofactor evidence="1">
        <name>Zn(2+)</name>
        <dbReference type="ChEBI" id="CHEBI:29105"/>
    </cofactor>
    <text evidence="1">Binds 1 zinc ion per subunit.</text>
</comment>
<comment type="pathway">
    <text evidence="1">Cofactor biosynthesis; riboflavin biosynthesis; 5-amino-6-(D-ribitylamino)uracil from GTP: step 1/4.</text>
</comment>
<comment type="similarity">
    <text evidence="1">Belongs to the GTP cyclohydrolase II family.</text>
</comment>
<reference key="1">
    <citation type="submission" date="2008-05" db="EMBL/GenBank/DDBJ databases">
        <title>Genome sequence of Helicobacter pylori from the remote Amazon: traces of Asian ancestry of the first Americans.</title>
        <authorList>
            <person name="Kersulyte D."/>
            <person name="Kalia A."/>
            <person name="Gilman R.H."/>
            <person name="Berg D.E."/>
        </authorList>
    </citation>
    <scope>NUCLEOTIDE SEQUENCE [LARGE SCALE GENOMIC DNA]</scope>
    <source>
        <strain>Shi470</strain>
    </source>
</reference>
<accession>B2UT29</accession>